<evidence type="ECO:0000255" key="1">
    <source>
        <dbReference type="HAMAP-Rule" id="MF_01013"/>
    </source>
</evidence>
<organism>
    <name type="scientific">Chlorobium luteolum (strain DSM 273 / BCRC 81028 / 2530)</name>
    <name type="common">Pelodictyon luteolum</name>
    <dbReference type="NCBI Taxonomy" id="319225"/>
    <lineage>
        <taxon>Bacteria</taxon>
        <taxon>Pseudomonadati</taxon>
        <taxon>Chlorobiota</taxon>
        <taxon>Chlorobiia</taxon>
        <taxon>Chlorobiales</taxon>
        <taxon>Chlorobiaceae</taxon>
        <taxon>Chlorobium/Pelodictyon group</taxon>
        <taxon>Pelodictyon</taxon>
    </lineage>
</organism>
<gene>
    <name evidence="1" type="primary">hisF</name>
    <name type="ordered locus">Plut_1518</name>
</gene>
<name>HIS6_CHLL3</name>
<comment type="function">
    <text evidence="1">IGPS catalyzes the conversion of PRFAR and glutamine to IGP, AICAR and glutamate. The HisF subunit catalyzes the cyclization activity that produces IGP and AICAR from PRFAR using the ammonia provided by the HisH subunit.</text>
</comment>
<comment type="catalytic activity">
    <reaction evidence="1">
        <text>5-[(5-phospho-1-deoxy-D-ribulos-1-ylimino)methylamino]-1-(5-phospho-beta-D-ribosyl)imidazole-4-carboxamide + L-glutamine = D-erythro-1-(imidazol-4-yl)glycerol 3-phosphate + 5-amino-1-(5-phospho-beta-D-ribosyl)imidazole-4-carboxamide + L-glutamate + H(+)</text>
        <dbReference type="Rhea" id="RHEA:24793"/>
        <dbReference type="ChEBI" id="CHEBI:15378"/>
        <dbReference type="ChEBI" id="CHEBI:29985"/>
        <dbReference type="ChEBI" id="CHEBI:58278"/>
        <dbReference type="ChEBI" id="CHEBI:58359"/>
        <dbReference type="ChEBI" id="CHEBI:58475"/>
        <dbReference type="ChEBI" id="CHEBI:58525"/>
        <dbReference type="EC" id="4.3.2.10"/>
    </reaction>
</comment>
<comment type="pathway">
    <text evidence="1">Amino-acid biosynthesis; L-histidine biosynthesis; L-histidine from 5-phospho-alpha-D-ribose 1-diphosphate: step 5/9.</text>
</comment>
<comment type="subunit">
    <text evidence="1">Heterodimer of HisH and HisF.</text>
</comment>
<comment type="subcellular location">
    <subcellularLocation>
        <location evidence="1">Cytoplasm</location>
    </subcellularLocation>
</comment>
<comment type="similarity">
    <text evidence="1">Belongs to the HisA/HisF family.</text>
</comment>
<keyword id="KW-0028">Amino-acid biosynthesis</keyword>
<keyword id="KW-0963">Cytoplasm</keyword>
<keyword id="KW-0368">Histidine biosynthesis</keyword>
<keyword id="KW-0456">Lyase</keyword>
<keyword id="KW-1185">Reference proteome</keyword>
<feature type="chain" id="PRO_0000230131" description="Imidazole glycerol phosphate synthase subunit HisF">
    <location>
        <begin position="1"/>
        <end position="251"/>
    </location>
</feature>
<feature type="active site" evidence="1">
    <location>
        <position position="11"/>
    </location>
</feature>
<feature type="active site" evidence="1">
    <location>
        <position position="130"/>
    </location>
</feature>
<accession>Q3B2Q6</accession>
<proteinExistence type="inferred from homology"/>
<sequence length="251" mass="27411">MLAKRIIPCLDVRDGRVVKGINFEGLRDAGSILEQARFYNNELADELVFLDISASLESRRTTLEEVLKVSGEVFIPLTVGGGINSVERAREVFLHGADKVSVNTAAVKEPELISRIAEKYGSQAVVVAIDIKKVDGRYIVHTHSGKQPTAYEALEWALKVQELGAGEILLTSMDRDGTKEGYDNDSLALISTAVHIPVIASGGAGSLEHLYDGFTKGHADAALAASIFHFRQHSIREAKQYLRDRGITVRL</sequence>
<dbReference type="EC" id="4.3.2.10" evidence="1"/>
<dbReference type="EMBL" id="CP000096">
    <property type="protein sequence ID" value="ABB24375.1"/>
    <property type="molecule type" value="Genomic_DNA"/>
</dbReference>
<dbReference type="RefSeq" id="WP_011358247.1">
    <property type="nucleotide sequence ID" value="NC_007512.1"/>
</dbReference>
<dbReference type="SMR" id="Q3B2Q6"/>
<dbReference type="STRING" id="319225.Plut_1518"/>
<dbReference type="KEGG" id="plt:Plut_1518"/>
<dbReference type="eggNOG" id="COG0107">
    <property type="taxonomic scope" value="Bacteria"/>
</dbReference>
<dbReference type="HOGENOM" id="CLU_048577_4_0_10"/>
<dbReference type="OrthoDB" id="9781903at2"/>
<dbReference type="UniPathway" id="UPA00031">
    <property type="reaction ID" value="UER00010"/>
</dbReference>
<dbReference type="Proteomes" id="UP000002709">
    <property type="component" value="Chromosome"/>
</dbReference>
<dbReference type="GO" id="GO:0005737">
    <property type="term" value="C:cytoplasm"/>
    <property type="evidence" value="ECO:0007669"/>
    <property type="project" value="UniProtKB-SubCell"/>
</dbReference>
<dbReference type="GO" id="GO:0000107">
    <property type="term" value="F:imidazoleglycerol-phosphate synthase activity"/>
    <property type="evidence" value="ECO:0007669"/>
    <property type="project" value="UniProtKB-UniRule"/>
</dbReference>
<dbReference type="GO" id="GO:0016829">
    <property type="term" value="F:lyase activity"/>
    <property type="evidence" value="ECO:0007669"/>
    <property type="project" value="UniProtKB-KW"/>
</dbReference>
<dbReference type="GO" id="GO:0000105">
    <property type="term" value="P:L-histidine biosynthetic process"/>
    <property type="evidence" value="ECO:0007669"/>
    <property type="project" value="UniProtKB-UniRule"/>
</dbReference>
<dbReference type="CDD" id="cd04731">
    <property type="entry name" value="HisF"/>
    <property type="match status" value="1"/>
</dbReference>
<dbReference type="FunFam" id="3.20.20.70:FF:000006">
    <property type="entry name" value="Imidazole glycerol phosphate synthase subunit HisF"/>
    <property type="match status" value="1"/>
</dbReference>
<dbReference type="Gene3D" id="3.20.20.70">
    <property type="entry name" value="Aldolase class I"/>
    <property type="match status" value="1"/>
</dbReference>
<dbReference type="HAMAP" id="MF_01013">
    <property type="entry name" value="HisF"/>
    <property type="match status" value="1"/>
</dbReference>
<dbReference type="InterPro" id="IPR013785">
    <property type="entry name" value="Aldolase_TIM"/>
</dbReference>
<dbReference type="InterPro" id="IPR006062">
    <property type="entry name" value="His_biosynth"/>
</dbReference>
<dbReference type="InterPro" id="IPR004651">
    <property type="entry name" value="HisF"/>
</dbReference>
<dbReference type="InterPro" id="IPR050064">
    <property type="entry name" value="IGPS_HisA/HisF"/>
</dbReference>
<dbReference type="InterPro" id="IPR011060">
    <property type="entry name" value="RibuloseP-bd_barrel"/>
</dbReference>
<dbReference type="NCBIfam" id="TIGR00735">
    <property type="entry name" value="hisF"/>
    <property type="match status" value="1"/>
</dbReference>
<dbReference type="PANTHER" id="PTHR21235:SF2">
    <property type="entry name" value="IMIDAZOLE GLYCEROL PHOSPHATE SYNTHASE HISHF"/>
    <property type="match status" value="1"/>
</dbReference>
<dbReference type="PANTHER" id="PTHR21235">
    <property type="entry name" value="IMIDAZOLE GLYCEROL PHOSPHATE SYNTHASE SUBUNIT HISF/H IGP SYNTHASE SUBUNIT HISF/H"/>
    <property type="match status" value="1"/>
</dbReference>
<dbReference type="Pfam" id="PF00977">
    <property type="entry name" value="His_biosynth"/>
    <property type="match status" value="1"/>
</dbReference>
<dbReference type="SUPFAM" id="SSF51366">
    <property type="entry name" value="Ribulose-phoshate binding barrel"/>
    <property type="match status" value="1"/>
</dbReference>
<protein>
    <recommendedName>
        <fullName evidence="1">Imidazole glycerol phosphate synthase subunit HisF</fullName>
        <ecNumber evidence="1">4.3.2.10</ecNumber>
    </recommendedName>
    <alternativeName>
        <fullName evidence="1">IGP synthase cyclase subunit</fullName>
    </alternativeName>
    <alternativeName>
        <fullName evidence="1">IGP synthase subunit HisF</fullName>
    </alternativeName>
    <alternativeName>
        <fullName evidence="1">ImGP synthase subunit HisF</fullName>
        <shortName evidence="1">IGPS subunit HisF</shortName>
    </alternativeName>
</protein>
<reference key="1">
    <citation type="submission" date="2005-08" db="EMBL/GenBank/DDBJ databases">
        <title>Complete sequence of Pelodictyon luteolum DSM 273.</title>
        <authorList>
            <consortium name="US DOE Joint Genome Institute"/>
            <person name="Copeland A."/>
            <person name="Lucas S."/>
            <person name="Lapidus A."/>
            <person name="Barry K."/>
            <person name="Detter J.C."/>
            <person name="Glavina T."/>
            <person name="Hammon N."/>
            <person name="Israni S."/>
            <person name="Pitluck S."/>
            <person name="Bryant D."/>
            <person name="Schmutz J."/>
            <person name="Larimer F."/>
            <person name="Land M."/>
            <person name="Kyrpides N."/>
            <person name="Ivanova N."/>
            <person name="Richardson P."/>
        </authorList>
    </citation>
    <scope>NUCLEOTIDE SEQUENCE [LARGE SCALE GENOMIC DNA]</scope>
    <source>
        <strain>DSM 273 / BCRC 81028 / 2530</strain>
    </source>
</reference>